<keyword id="KW-0687">Ribonucleoprotein</keyword>
<keyword id="KW-0689">Ribosomal protein</keyword>
<keyword id="KW-0694">RNA-binding</keyword>
<keyword id="KW-0699">rRNA-binding</keyword>
<sequence length="177" mass="18982">MSRIAKYPVELPKGVEANIQQDQITVKGPLGTLSQALTGDVTVALDNGKLTFVAANESRHAGAMSGTVRALVANMVTGVSKGFERKLTLVGVGYRAQVQGDAVKLQLGFSHDIVHKLPAGVKAECPTQTEIVIKGSNKQVVGQVAAELRAYREPEPYKGKGVRYADERVVIKETKKK</sequence>
<name>RL6_BORPD</name>
<protein>
    <recommendedName>
        <fullName evidence="1">Large ribosomal subunit protein uL6</fullName>
    </recommendedName>
    <alternativeName>
        <fullName evidence="2">50S ribosomal protein L6</fullName>
    </alternativeName>
</protein>
<reference key="1">
    <citation type="journal article" date="2008" name="BMC Genomics">
        <title>The missing link: Bordetella petrii is endowed with both the metabolic versatility of environmental bacteria and virulence traits of pathogenic Bordetellae.</title>
        <authorList>
            <person name="Gross R."/>
            <person name="Guzman C.A."/>
            <person name="Sebaihia M."/>
            <person name="Martin dos Santos V.A.P."/>
            <person name="Pieper D.H."/>
            <person name="Koebnik R."/>
            <person name="Lechner M."/>
            <person name="Bartels D."/>
            <person name="Buhrmester J."/>
            <person name="Choudhuri J.V."/>
            <person name="Ebensen T."/>
            <person name="Gaigalat L."/>
            <person name="Herrmann S."/>
            <person name="Khachane A.N."/>
            <person name="Larisch C."/>
            <person name="Link S."/>
            <person name="Linke B."/>
            <person name="Meyer F."/>
            <person name="Mormann S."/>
            <person name="Nakunst D."/>
            <person name="Rueckert C."/>
            <person name="Schneiker-Bekel S."/>
            <person name="Schulze K."/>
            <person name="Voerholter F.-J."/>
            <person name="Yevsa T."/>
            <person name="Engle J.T."/>
            <person name="Goldman W.E."/>
            <person name="Puehler A."/>
            <person name="Goebel U.B."/>
            <person name="Goesmann A."/>
            <person name="Bloecker H."/>
            <person name="Kaiser O."/>
            <person name="Martinez-Arias R."/>
        </authorList>
    </citation>
    <scope>NUCLEOTIDE SEQUENCE [LARGE SCALE GENOMIC DNA]</scope>
    <source>
        <strain>ATCC BAA-461 / DSM 12804 / CCUG 43448</strain>
    </source>
</reference>
<accession>A9IHT3</accession>
<proteinExistence type="inferred from homology"/>
<evidence type="ECO:0000255" key="1">
    <source>
        <dbReference type="HAMAP-Rule" id="MF_01365"/>
    </source>
</evidence>
<evidence type="ECO:0000305" key="2"/>
<gene>
    <name evidence="1" type="primary">rplF</name>
    <name type="ordered locus">Bpet4935</name>
</gene>
<comment type="function">
    <text evidence="1">This protein binds to the 23S rRNA, and is important in its secondary structure. It is located near the subunit interface in the base of the L7/L12 stalk, and near the tRNA binding site of the peptidyltransferase center.</text>
</comment>
<comment type="subunit">
    <text evidence="1">Part of the 50S ribosomal subunit.</text>
</comment>
<comment type="similarity">
    <text evidence="1">Belongs to the universal ribosomal protein uL6 family.</text>
</comment>
<organism>
    <name type="scientific">Bordetella petrii (strain ATCC BAA-461 / DSM 12804 / CCUG 43448)</name>
    <dbReference type="NCBI Taxonomy" id="340100"/>
    <lineage>
        <taxon>Bacteria</taxon>
        <taxon>Pseudomonadati</taxon>
        <taxon>Pseudomonadota</taxon>
        <taxon>Betaproteobacteria</taxon>
        <taxon>Burkholderiales</taxon>
        <taxon>Alcaligenaceae</taxon>
        <taxon>Bordetella</taxon>
    </lineage>
</organism>
<dbReference type="EMBL" id="AM902716">
    <property type="protein sequence ID" value="CAP45287.1"/>
    <property type="molecule type" value="Genomic_DNA"/>
</dbReference>
<dbReference type="SMR" id="A9IHT3"/>
<dbReference type="STRING" id="94624.Bpet4935"/>
<dbReference type="KEGG" id="bpt:Bpet4935"/>
<dbReference type="eggNOG" id="COG0097">
    <property type="taxonomic scope" value="Bacteria"/>
</dbReference>
<dbReference type="Proteomes" id="UP000001225">
    <property type="component" value="Chromosome"/>
</dbReference>
<dbReference type="GO" id="GO:0022625">
    <property type="term" value="C:cytosolic large ribosomal subunit"/>
    <property type="evidence" value="ECO:0007669"/>
    <property type="project" value="TreeGrafter"/>
</dbReference>
<dbReference type="GO" id="GO:0019843">
    <property type="term" value="F:rRNA binding"/>
    <property type="evidence" value="ECO:0007669"/>
    <property type="project" value="UniProtKB-UniRule"/>
</dbReference>
<dbReference type="GO" id="GO:0003735">
    <property type="term" value="F:structural constituent of ribosome"/>
    <property type="evidence" value="ECO:0007669"/>
    <property type="project" value="InterPro"/>
</dbReference>
<dbReference type="GO" id="GO:0002181">
    <property type="term" value="P:cytoplasmic translation"/>
    <property type="evidence" value="ECO:0007669"/>
    <property type="project" value="TreeGrafter"/>
</dbReference>
<dbReference type="FunFam" id="3.90.930.12:FF:000001">
    <property type="entry name" value="50S ribosomal protein L6"/>
    <property type="match status" value="1"/>
</dbReference>
<dbReference type="FunFam" id="3.90.930.12:FF:000002">
    <property type="entry name" value="50S ribosomal protein L6"/>
    <property type="match status" value="1"/>
</dbReference>
<dbReference type="Gene3D" id="3.90.930.12">
    <property type="entry name" value="Ribosomal protein L6, alpha-beta domain"/>
    <property type="match status" value="2"/>
</dbReference>
<dbReference type="HAMAP" id="MF_01365_B">
    <property type="entry name" value="Ribosomal_uL6_B"/>
    <property type="match status" value="1"/>
</dbReference>
<dbReference type="InterPro" id="IPR000702">
    <property type="entry name" value="Ribosomal_uL6-like"/>
</dbReference>
<dbReference type="InterPro" id="IPR036789">
    <property type="entry name" value="Ribosomal_uL6-like_a/b-dom_sf"/>
</dbReference>
<dbReference type="InterPro" id="IPR020040">
    <property type="entry name" value="Ribosomal_uL6_a/b-dom"/>
</dbReference>
<dbReference type="InterPro" id="IPR019906">
    <property type="entry name" value="Ribosomal_uL6_bac-type"/>
</dbReference>
<dbReference type="InterPro" id="IPR002358">
    <property type="entry name" value="Ribosomal_uL6_CS"/>
</dbReference>
<dbReference type="NCBIfam" id="TIGR03654">
    <property type="entry name" value="L6_bact"/>
    <property type="match status" value="1"/>
</dbReference>
<dbReference type="PANTHER" id="PTHR11655">
    <property type="entry name" value="60S/50S RIBOSOMAL PROTEIN L6/L9"/>
    <property type="match status" value="1"/>
</dbReference>
<dbReference type="PANTHER" id="PTHR11655:SF14">
    <property type="entry name" value="LARGE RIBOSOMAL SUBUNIT PROTEIN UL6M"/>
    <property type="match status" value="1"/>
</dbReference>
<dbReference type="Pfam" id="PF00347">
    <property type="entry name" value="Ribosomal_L6"/>
    <property type="match status" value="2"/>
</dbReference>
<dbReference type="PIRSF" id="PIRSF002162">
    <property type="entry name" value="Ribosomal_L6"/>
    <property type="match status" value="1"/>
</dbReference>
<dbReference type="PRINTS" id="PR00059">
    <property type="entry name" value="RIBOSOMALL6"/>
</dbReference>
<dbReference type="SUPFAM" id="SSF56053">
    <property type="entry name" value="Ribosomal protein L6"/>
    <property type="match status" value="2"/>
</dbReference>
<dbReference type="PROSITE" id="PS00525">
    <property type="entry name" value="RIBOSOMAL_L6_1"/>
    <property type="match status" value="1"/>
</dbReference>
<feature type="chain" id="PRO_1000143948" description="Large ribosomal subunit protein uL6">
    <location>
        <begin position="1"/>
        <end position="177"/>
    </location>
</feature>